<sequence>MNFDMSKLMQQAQKMQEQMKKAQQERENMEVIGESGAGLVTVTMTGKYDVKSVSIDNSLMSEDKEILEDLIAAAVNSAVKKVEENSTASSNIYKMAKDAGIDLPSGINFPFK</sequence>
<feature type="chain" id="PRO_1000071915" description="Nucleoid-associated protein FTL_1411">
    <location>
        <begin position="1"/>
        <end position="112"/>
    </location>
</feature>
<feature type="region of interest" description="Disordered" evidence="2">
    <location>
        <begin position="1"/>
        <end position="27"/>
    </location>
</feature>
<feature type="compositionally biased region" description="Basic and acidic residues" evidence="2">
    <location>
        <begin position="17"/>
        <end position="27"/>
    </location>
</feature>
<dbReference type="EMBL" id="AM233362">
    <property type="protein sequence ID" value="CAJ79850.1"/>
    <property type="molecule type" value="Genomic_DNA"/>
</dbReference>
<dbReference type="RefSeq" id="WP_003016682.1">
    <property type="nucleotide sequence ID" value="NZ_CP009694.1"/>
</dbReference>
<dbReference type="SMR" id="Q2A2I6"/>
<dbReference type="KEGG" id="ftl:FTL_1411"/>
<dbReference type="Proteomes" id="UP000001944">
    <property type="component" value="Chromosome"/>
</dbReference>
<dbReference type="GO" id="GO:0043590">
    <property type="term" value="C:bacterial nucleoid"/>
    <property type="evidence" value="ECO:0007669"/>
    <property type="project" value="UniProtKB-UniRule"/>
</dbReference>
<dbReference type="GO" id="GO:0005829">
    <property type="term" value="C:cytosol"/>
    <property type="evidence" value="ECO:0007669"/>
    <property type="project" value="TreeGrafter"/>
</dbReference>
<dbReference type="GO" id="GO:0003677">
    <property type="term" value="F:DNA binding"/>
    <property type="evidence" value="ECO:0007669"/>
    <property type="project" value="UniProtKB-UniRule"/>
</dbReference>
<dbReference type="Gene3D" id="3.30.1310.10">
    <property type="entry name" value="Nucleoid-associated protein YbaB-like domain"/>
    <property type="match status" value="1"/>
</dbReference>
<dbReference type="HAMAP" id="MF_00274">
    <property type="entry name" value="DNA_YbaB_EbfC"/>
    <property type="match status" value="1"/>
</dbReference>
<dbReference type="InterPro" id="IPR036894">
    <property type="entry name" value="YbaB-like_sf"/>
</dbReference>
<dbReference type="InterPro" id="IPR004401">
    <property type="entry name" value="YbaB/EbfC"/>
</dbReference>
<dbReference type="NCBIfam" id="TIGR00103">
    <property type="entry name" value="DNA_YbaB_EbfC"/>
    <property type="match status" value="1"/>
</dbReference>
<dbReference type="PANTHER" id="PTHR33449">
    <property type="entry name" value="NUCLEOID-ASSOCIATED PROTEIN YBAB"/>
    <property type="match status" value="1"/>
</dbReference>
<dbReference type="PANTHER" id="PTHR33449:SF1">
    <property type="entry name" value="NUCLEOID-ASSOCIATED PROTEIN YBAB"/>
    <property type="match status" value="1"/>
</dbReference>
<dbReference type="Pfam" id="PF02575">
    <property type="entry name" value="YbaB_DNA_bd"/>
    <property type="match status" value="1"/>
</dbReference>
<dbReference type="PIRSF" id="PIRSF004555">
    <property type="entry name" value="UCP004555"/>
    <property type="match status" value="1"/>
</dbReference>
<dbReference type="SUPFAM" id="SSF82607">
    <property type="entry name" value="YbaB-like"/>
    <property type="match status" value="1"/>
</dbReference>
<comment type="function">
    <text evidence="1">Binds to DNA and alters its conformation. May be involved in regulation of gene expression, nucleoid organization and DNA protection.</text>
</comment>
<comment type="subunit">
    <text evidence="1">Homodimer.</text>
</comment>
<comment type="subcellular location">
    <subcellularLocation>
        <location evidence="1">Cytoplasm</location>
        <location evidence="1">Nucleoid</location>
    </subcellularLocation>
</comment>
<comment type="similarity">
    <text evidence="1">Belongs to the YbaB/EbfC family.</text>
</comment>
<proteinExistence type="inferred from homology"/>
<evidence type="ECO:0000255" key="1">
    <source>
        <dbReference type="HAMAP-Rule" id="MF_00274"/>
    </source>
</evidence>
<evidence type="ECO:0000256" key="2">
    <source>
        <dbReference type="SAM" id="MobiDB-lite"/>
    </source>
</evidence>
<name>Y1411_FRATH</name>
<protein>
    <recommendedName>
        <fullName evidence="1">Nucleoid-associated protein FTL_1411</fullName>
    </recommendedName>
</protein>
<organism>
    <name type="scientific">Francisella tularensis subsp. holarctica (strain LVS)</name>
    <dbReference type="NCBI Taxonomy" id="376619"/>
    <lineage>
        <taxon>Bacteria</taxon>
        <taxon>Pseudomonadati</taxon>
        <taxon>Pseudomonadota</taxon>
        <taxon>Gammaproteobacteria</taxon>
        <taxon>Thiotrichales</taxon>
        <taxon>Francisellaceae</taxon>
        <taxon>Francisella</taxon>
    </lineage>
</organism>
<accession>Q2A2I6</accession>
<gene>
    <name type="ordered locus">FTL_1411</name>
</gene>
<keyword id="KW-0963">Cytoplasm</keyword>
<keyword id="KW-0238">DNA-binding</keyword>
<keyword id="KW-1185">Reference proteome</keyword>
<reference key="1">
    <citation type="submission" date="2006-03" db="EMBL/GenBank/DDBJ databases">
        <title>Complete genome sequence of Francisella tularensis LVS (Live Vaccine Strain).</title>
        <authorList>
            <person name="Chain P."/>
            <person name="Larimer F."/>
            <person name="Land M."/>
            <person name="Stilwagen S."/>
            <person name="Larsson P."/>
            <person name="Bearden S."/>
            <person name="Chu M."/>
            <person name="Oyston P."/>
            <person name="Forsman M."/>
            <person name="Andersson S."/>
            <person name="Lindler L."/>
            <person name="Titball R."/>
            <person name="Garcia E."/>
        </authorList>
    </citation>
    <scope>NUCLEOTIDE SEQUENCE [LARGE SCALE GENOMIC DNA]</scope>
    <source>
        <strain>LVS</strain>
    </source>
</reference>